<comment type="function">
    <text evidence="2 6">Hydroxylase/desaturase; part of the gene cluster that mediates the biosynthesis of oxaleimides, cytotoxic compounds containing an unusual disubstituted succinimide moiety (PubMed:28365998). The first step of the pathway is provided by the HR-PKS poxF that serves in a new mode of collaborative biosynthesis with the PKS-NRPS poxE, by providing the olefin containing amino acid substrate via the synthesis of an ACP-bound dec-4-enoate (PubMed:28365998). The cytochrome P450 monooxygenase poxM-catalyzed oxidation at the alpha-position creates the enzyme-bound 2-hydroxydec-4-enoyl-ACP thioester, which may be prone to spontaneous hydrolysis to yield 2-hydroxydec-4-enoic acid due to increased electrophilicity of the carbonyl (PubMed:28365998). 2-hydroxydec-4-enoic acid can then be further oxidized by poxM to yield the alpha-ketoacid 2-oxodec-4-enoicacid, which is reductively aminated by the aminotransferase poxL to yield (S,E)-2-aminodec-4-enoic acid (PubMed:28365998). The Hybrid PKS-NRPS synthetase poxE then performs condensation between the octaketide product of its PKS modules and the amino group of (S,E)-2-aminodec-4-enoic acid which is activated and incorporated by the adenylation domain (PubMed:28365998). The resulting aminoacyl product can be cyclized by the Diels-Alderase PoxQ and reductively released by the reductive (R) domain of poxE to yield an aldehyde intermediate (Probable) (PubMed:28365998). The released aldehyde is then substrate for a Knoevenagel condensation by the hydrolyase poxO followed by an oxidation at the 5-position of the pyrrolidone ring (PubMed:28365998). The presence of the olefin from the amino acid building block allows for migration of the substituted allyl group to occur (PubMed:28365998). This allylic transposition reaction takes place in a conjugate addition, semipinacol-like fashion to yield a succinimide intermediate (PubMed:28365998). Iterative two-electron oxidations of the C7 methyl of the succinimide intermediate to the carboxylic acid can be catalyzed by one of two remaining cytochrome P450 monooxygenasess poxC or poxD to yield oxaleimide A (PubMed:28365998). Subsequent oxidation yields the maleimide scaffold oxaleimide I (PubMed:28365998). Both oxaleimide A and oxaleimide I can undergo oxidative modifications in the decalin ring to yield the series of products oxaleimides B to H (PubMed:28365998).</text>
</comment>
<comment type="pathway">
    <text evidence="5">Secondary metabolite biosynthesis.</text>
</comment>
<comment type="induction">
    <text evidence="2">Expression is positively regulated by the oxaleimides biosynthesis cluster-specific transcription factor poxB.</text>
</comment>
<comment type="similarity">
    <text evidence="4">Belongs to the asaB hydroxylase/desaturase family.</text>
</comment>
<gene>
    <name evidence="3" type="primary">poxK</name>
</gene>
<name>POXK_PENOX</name>
<proteinExistence type="evidence at transcript level"/>
<feature type="chain" id="PRO_0000453775" description="Hydroxylase/desaturase poxK">
    <location>
        <begin position="1"/>
        <end position="325"/>
    </location>
</feature>
<feature type="region of interest" description="Disordered" evidence="1">
    <location>
        <begin position="1"/>
        <end position="25"/>
    </location>
</feature>
<feature type="compositionally biased region" description="Low complexity" evidence="1">
    <location>
        <begin position="1"/>
        <end position="12"/>
    </location>
</feature>
<keyword id="KW-0560">Oxidoreductase</keyword>
<organism>
    <name type="scientific">Penicillium oxalicum</name>
    <dbReference type="NCBI Taxonomy" id="69781"/>
    <lineage>
        <taxon>Eukaryota</taxon>
        <taxon>Fungi</taxon>
        <taxon>Dikarya</taxon>
        <taxon>Ascomycota</taxon>
        <taxon>Pezizomycotina</taxon>
        <taxon>Eurotiomycetes</taxon>
        <taxon>Eurotiomycetidae</taxon>
        <taxon>Eurotiales</taxon>
        <taxon>Aspergillaceae</taxon>
        <taxon>Penicillium</taxon>
    </lineage>
</organism>
<sequence length="325" mass="35597">MTATATPVPTVASHAQDITLPPPPKGDITTPILFAQDFQKPSTGYMFIKNPPPAGVPYTNIRGEPAMVTVEDLRGKENSVNLDRDSLQVLQGLTDVPRSPEVNWNSVESVEKTFYPAVEAAIKSAIPGAHTVHIFRHGIRHTQNWPVPYNPPAMIAHLDQTGPAAINRVLRHMGPVEGPRLLQGRYRIVHFWTPLNGPVYTCPVAVASSATVKDNDIQIFVSHLGGIGGLDMPLGRPVAKPDASEQYREDFGAPRYANGQRWFYLSGITQDEALLIQIFDSNALQKDSTVQGGRAVHSAFRDPRTPQGAPDRWSIEVSCLVFSDE</sequence>
<reference key="1">
    <citation type="journal article" date="2017" name="J. Am. Chem. Soc.">
        <title>Collaborative Biosynthesis of Maleimide- and Succinimide-Containing Natural Products by Fungal Polyketide Megasynthases.</title>
        <authorList>
            <person name="Sato M."/>
            <person name="Dander J.E."/>
            <person name="Sato C."/>
            <person name="Hung Y.S."/>
            <person name="Gao S.S."/>
            <person name="Tang M.C."/>
            <person name="Hang L."/>
            <person name="Winter J.M."/>
            <person name="Garg N.K."/>
            <person name="Watanabe K."/>
            <person name="Tang Y."/>
        </authorList>
    </citation>
    <scope>NUCLEOTIDE SEQUENCE [GENOMIC DNA]</scope>
    <scope>FUNCTION</scope>
    <scope>INDUCTION</scope>
    <scope>PATHWAY</scope>
    <source>
        <strain>K85</strain>
    </source>
</reference>
<reference key="2">
    <citation type="journal article" date="2020" name="Chem. Commun. (Camb.)">
        <title>Evidence for enzyme catalysed intramolecular [4+2] Diels-Alder cyclization during the biosynthesis of pyrichalasin H.</title>
        <authorList>
            <person name="Hantke V."/>
            <person name="Skellam E.J."/>
            <person name="Cox R.J."/>
        </authorList>
    </citation>
    <scope>FUNCTION</scope>
</reference>
<dbReference type="EC" id="1.-.-.-" evidence="5"/>
<dbReference type="EMBL" id="KY764300">
    <property type="protein sequence ID" value="ARF05985.1"/>
    <property type="molecule type" value="Genomic_DNA"/>
</dbReference>
<dbReference type="SMR" id="A0A1W5T3K7"/>
<dbReference type="GO" id="GO:0016491">
    <property type="term" value="F:oxidoreductase activity"/>
    <property type="evidence" value="ECO:0007669"/>
    <property type="project" value="UniProtKB-KW"/>
</dbReference>
<dbReference type="InterPro" id="IPR044053">
    <property type="entry name" value="AsaB-like"/>
</dbReference>
<dbReference type="NCBIfam" id="NF041278">
    <property type="entry name" value="CmcJ_NvfI_EfuI"/>
    <property type="match status" value="1"/>
</dbReference>
<dbReference type="PANTHER" id="PTHR34598">
    <property type="entry name" value="BLL6449 PROTEIN"/>
    <property type="match status" value="1"/>
</dbReference>
<dbReference type="PANTHER" id="PTHR34598:SF1">
    <property type="entry name" value="PUTATIVE (AFU_ORTHOLOGUE AFUA_3G13140)-RELATED"/>
    <property type="match status" value="1"/>
</dbReference>
<protein>
    <recommendedName>
        <fullName evidence="3">Hydroxylase/desaturase poxK</fullName>
        <ecNumber evidence="5">1.-.-.-</ecNumber>
    </recommendedName>
    <alternativeName>
        <fullName evidence="3">Oxaleimides biosynthesis cluster protein K</fullName>
    </alternativeName>
</protein>
<accession>A0A1W5T3K7</accession>
<evidence type="ECO:0000256" key="1">
    <source>
        <dbReference type="SAM" id="MobiDB-lite"/>
    </source>
</evidence>
<evidence type="ECO:0000269" key="2">
    <source>
    </source>
</evidence>
<evidence type="ECO:0000303" key="3">
    <source>
    </source>
</evidence>
<evidence type="ECO:0000305" key="4"/>
<evidence type="ECO:0000305" key="5">
    <source>
    </source>
</evidence>
<evidence type="ECO:0000305" key="6">
    <source>
    </source>
</evidence>